<gene>
    <name evidence="7" type="primary">pfl4</name>
    <name evidence="10" type="ORF">SPCC188.09c</name>
</gene>
<sequence>MLFLRFFIFTFFTSIFTVVVSEPPVSAKFAKRVLSATSSSSSTCPEFITIFSEGPSEYITTIYPSSKSSGRGTTNHSTIYTTINSGTVASTYTVTLADGDVVVKDIEPTAGTVTTTITSGSHEFTTTLAEASGTVPGTVEVVEPLAGTVTTTIHSGSVEYNTTLATASGTVPGTVEVVEPAVGTVTTTIYSGSEEFTTTLASASGSISGTVEVIEPTAGTVTTTIYSGDQEYTTILAEASGTVPGTVEVIEPAVGTVTTTTYSGSVEYTTTLVPASGSVSGTVEVVEPAVGTVTTTLQSGSQAFTTTVPASGSVSGTVEVVQPTGGTVTNTVYEGSQTITSTLATASGTVPGTVEVILPGPSTIYSGTVATTITYDVSSTPASTVVVIPTAVCNGERGLQYAVYNYDISSSKNQFCATSGVTDVSSFTQPAYFGSSDLDQSSPLFTGVLSSSDSVPQWTSSYNLPGYPPDATAMGSTSSACKVIVYQFFFRVPVTDTFSLDVTNVDDVFYGWFGDKAISGWSNTNYDTYAYWHATNGQTGIASFSMGSLTADTYVPVRFVVANGAGKGGFDFSFVDSEGNSYNPTSYAYTATCTESFLPFGQGNGGVDN</sequence>
<proteinExistence type="inferred from homology"/>
<name>PFL4_SCHPO</name>
<keyword id="KW-0325">Glycoprotein</keyword>
<keyword id="KW-1185">Reference proteome</keyword>
<keyword id="KW-0677">Repeat</keyword>
<keyword id="KW-0732">Signal</keyword>
<evidence type="ECO:0000250" key="1">
    <source>
        <dbReference type="UniProtKB" id="O74346"/>
    </source>
</evidence>
<evidence type="ECO:0000255" key="2"/>
<evidence type="ECO:0000255" key="3">
    <source>
        <dbReference type="PROSITE-ProRule" id="PRU00498"/>
    </source>
</evidence>
<evidence type="ECO:0000255" key="4">
    <source>
        <dbReference type="PROSITE-ProRule" id="PRU01164"/>
    </source>
</evidence>
<evidence type="ECO:0000269" key="5">
    <source>
    </source>
</evidence>
<evidence type="ECO:0000303" key="6">
    <source>
    </source>
</evidence>
<evidence type="ECO:0000303" key="7">
    <source>
    </source>
</evidence>
<evidence type="ECO:0000305" key="8"/>
<evidence type="ECO:0000305" key="9">
    <source>
    </source>
</evidence>
<evidence type="ECO:0000312" key="10">
    <source>
        <dbReference type="PomBase" id="SPCC188.09c"/>
    </source>
</evidence>
<comment type="function">
    <text evidence="1 5">May be involved in agglutination during conjugation or other aspects of colony formation (By similarity). Induces flocculation when overexpressed (PubMed:23236291).</text>
</comment>
<comment type="subcellular location">
    <subcellularLocation>
        <location evidence="9">Cell surface</location>
    </subcellularLocation>
</comment>
<comment type="similarity">
    <text evidence="8">Belongs to the mam3/map4 family.</text>
</comment>
<feature type="signal peptide" evidence="2">
    <location>
        <begin position="1"/>
        <end position="21"/>
    </location>
</feature>
<feature type="chain" id="PRO_0000353812" description="Putative cell agglutination protein pfl4">
    <location>
        <begin position="22"/>
        <end position="609"/>
    </location>
</feature>
<feature type="repeat" description="1" evidence="9">
    <location>
        <begin position="77"/>
        <end position="110"/>
    </location>
</feature>
<feature type="repeat" description="2" evidence="9">
    <location>
        <begin position="111"/>
        <end position="146"/>
    </location>
</feature>
<feature type="repeat" description="3" evidence="9">
    <location>
        <begin position="147"/>
        <end position="182"/>
    </location>
</feature>
<feature type="repeat" description="4" evidence="9">
    <location>
        <begin position="183"/>
        <end position="218"/>
    </location>
</feature>
<feature type="repeat" description="5" evidence="9">
    <location>
        <begin position="219"/>
        <end position="254"/>
    </location>
</feature>
<feature type="repeat" description="6" evidence="9">
    <location>
        <begin position="255"/>
        <end position="290"/>
    </location>
</feature>
<feature type="repeat" description="7" evidence="9">
    <location>
        <begin position="291"/>
        <end position="325"/>
    </location>
</feature>
<feature type="repeat" description="8" evidence="9">
    <location>
        <begin position="326"/>
        <end position="361"/>
    </location>
</feature>
<feature type="repeat" description="9" evidence="9">
    <location>
        <begin position="362"/>
        <end position="391"/>
    </location>
</feature>
<feature type="domain" description="PA14" evidence="4">
    <location>
        <begin position="427"/>
        <end position="589"/>
    </location>
</feature>
<feature type="region of interest" description="9 X 36 AA approximate tandem repeats" evidence="9">
    <location>
        <begin position="75"/>
        <end position="391"/>
    </location>
</feature>
<feature type="glycosylation site" description="N-linked (GlcNAc...) asparagine" evidence="3">
    <location>
        <position position="75"/>
    </location>
</feature>
<feature type="glycosylation site" description="N-linked (GlcNAc...) asparagine" evidence="3">
    <location>
        <position position="161"/>
    </location>
</feature>
<reference key="1">
    <citation type="journal article" date="2002" name="Nature">
        <title>The genome sequence of Schizosaccharomyces pombe.</title>
        <authorList>
            <person name="Wood V."/>
            <person name="Gwilliam R."/>
            <person name="Rajandream M.A."/>
            <person name="Lyne M.H."/>
            <person name="Lyne R."/>
            <person name="Stewart A."/>
            <person name="Sgouros J.G."/>
            <person name="Peat N."/>
            <person name="Hayles J."/>
            <person name="Baker S.G."/>
            <person name="Basham D."/>
            <person name="Bowman S."/>
            <person name="Brooks K."/>
            <person name="Brown D."/>
            <person name="Brown S."/>
            <person name="Chillingworth T."/>
            <person name="Churcher C.M."/>
            <person name="Collins M."/>
            <person name="Connor R."/>
            <person name="Cronin A."/>
            <person name="Davis P."/>
            <person name="Feltwell T."/>
            <person name="Fraser A."/>
            <person name="Gentles S."/>
            <person name="Goble A."/>
            <person name="Hamlin N."/>
            <person name="Harris D.E."/>
            <person name="Hidalgo J."/>
            <person name="Hodgson G."/>
            <person name="Holroyd S."/>
            <person name="Hornsby T."/>
            <person name="Howarth S."/>
            <person name="Huckle E.J."/>
            <person name="Hunt S."/>
            <person name="Jagels K."/>
            <person name="James K.D."/>
            <person name="Jones L."/>
            <person name="Jones M."/>
            <person name="Leather S."/>
            <person name="McDonald S."/>
            <person name="McLean J."/>
            <person name="Mooney P."/>
            <person name="Moule S."/>
            <person name="Mungall K.L."/>
            <person name="Murphy L.D."/>
            <person name="Niblett D."/>
            <person name="Odell C."/>
            <person name="Oliver K."/>
            <person name="O'Neil S."/>
            <person name="Pearson D."/>
            <person name="Quail M.A."/>
            <person name="Rabbinowitsch E."/>
            <person name="Rutherford K.M."/>
            <person name="Rutter S."/>
            <person name="Saunders D."/>
            <person name="Seeger K."/>
            <person name="Sharp S."/>
            <person name="Skelton J."/>
            <person name="Simmonds M.N."/>
            <person name="Squares R."/>
            <person name="Squares S."/>
            <person name="Stevens K."/>
            <person name="Taylor K."/>
            <person name="Taylor R.G."/>
            <person name="Tivey A."/>
            <person name="Walsh S.V."/>
            <person name="Warren T."/>
            <person name="Whitehead S."/>
            <person name="Woodward J.R."/>
            <person name="Volckaert G."/>
            <person name="Aert R."/>
            <person name="Robben J."/>
            <person name="Grymonprez B."/>
            <person name="Weltjens I."/>
            <person name="Vanstreels E."/>
            <person name="Rieger M."/>
            <person name="Schaefer M."/>
            <person name="Mueller-Auer S."/>
            <person name="Gabel C."/>
            <person name="Fuchs M."/>
            <person name="Duesterhoeft A."/>
            <person name="Fritzc C."/>
            <person name="Holzer E."/>
            <person name="Moestl D."/>
            <person name="Hilbert H."/>
            <person name="Borzym K."/>
            <person name="Langer I."/>
            <person name="Beck A."/>
            <person name="Lehrach H."/>
            <person name="Reinhardt R."/>
            <person name="Pohl T.M."/>
            <person name="Eger P."/>
            <person name="Zimmermann W."/>
            <person name="Wedler H."/>
            <person name="Wambutt R."/>
            <person name="Purnelle B."/>
            <person name="Goffeau A."/>
            <person name="Cadieu E."/>
            <person name="Dreano S."/>
            <person name="Gloux S."/>
            <person name="Lelaure V."/>
            <person name="Mottier S."/>
            <person name="Galibert F."/>
            <person name="Aves S.J."/>
            <person name="Xiang Z."/>
            <person name="Hunt C."/>
            <person name="Moore K."/>
            <person name="Hurst S.M."/>
            <person name="Lucas M."/>
            <person name="Rochet M."/>
            <person name="Gaillardin C."/>
            <person name="Tallada V.A."/>
            <person name="Garzon A."/>
            <person name="Thode G."/>
            <person name="Daga R.R."/>
            <person name="Cruzado L."/>
            <person name="Jimenez J."/>
            <person name="Sanchez M."/>
            <person name="del Rey F."/>
            <person name="Benito J."/>
            <person name="Dominguez A."/>
            <person name="Revuelta J.L."/>
            <person name="Moreno S."/>
            <person name="Armstrong J."/>
            <person name="Forsburg S.L."/>
            <person name="Cerutti L."/>
            <person name="Lowe T."/>
            <person name="McCombie W.R."/>
            <person name="Paulsen I."/>
            <person name="Potashkin J."/>
            <person name="Shpakovski G.V."/>
            <person name="Ussery D."/>
            <person name="Barrell B.G."/>
            <person name="Nurse P."/>
        </authorList>
    </citation>
    <scope>NUCLEOTIDE SEQUENCE [LARGE SCALE GENOMIC DNA]</scope>
    <source>
        <strain>972 / ATCC 24843</strain>
    </source>
</reference>
<reference key="2">
    <citation type="journal article" date="2008" name="Fungal Genet. Biol.">
        <title>Molecular phylogenetics of ascomycotal adhesins--a novel family of putative cell-surface adhesive proteins in fission yeasts.</title>
        <authorList>
            <person name="Linder T."/>
            <person name="Gustafsson C.M."/>
        </authorList>
    </citation>
    <scope>DOMAIN</scope>
    <scope>REPEATS</scope>
</reference>
<reference key="3">
    <citation type="journal article" date="2012" name="PLoS Genet.">
        <title>Deciphering the transcriptional-regulatory network of flocculation in Schizosaccharomyces pombe.</title>
        <authorList>
            <person name="Kwon E.J."/>
            <person name="Laderoute A."/>
            <person name="Chatfield-Reed K."/>
            <person name="Vachon L."/>
            <person name="Karagiannis J."/>
            <person name="Chua G."/>
        </authorList>
    </citation>
    <scope>FUNCTION</scope>
</reference>
<organism>
    <name type="scientific">Schizosaccharomyces pombe (strain 972 / ATCC 24843)</name>
    <name type="common">Fission yeast</name>
    <dbReference type="NCBI Taxonomy" id="284812"/>
    <lineage>
        <taxon>Eukaryota</taxon>
        <taxon>Fungi</taxon>
        <taxon>Dikarya</taxon>
        <taxon>Ascomycota</taxon>
        <taxon>Taphrinomycotina</taxon>
        <taxon>Schizosaccharomycetes</taxon>
        <taxon>Schizosaccharomycetales</taxon>
        <taxon>Schizosaccharomycetaceae</taxon>
        <taxon>Schizosaccharomyces</taxon>
    </lineage>
</organism>
<accession>Q7Z9I1</accession>
<dbReference type="EMBL" id="CU329672">
    <property type="protein sequence ID" value="CAB41229.1"/>
    <property type="molecule type" value="Genomic_DNA"/>
</dbReference>
<dbReference type="PIR" id="T39124">
    <property type="entry name" value="S62518"/>
</dbReference>
<dbReference type="RefSeq" id="NP_588212.1">
    <property type="nucleotide sequence ID" value="NM_001023202.2"/>
</dbReference>
<dbReference type="SMR" id="Q7Z9I1"/>
<dbReference type="BioGRID" id="275772">
    <property type="interactions" value="38"/>
</dbReference>
<dbReference type="STRING" id="284812.Q7Z9I1"/>
<dbReference type="GlyCosmos" id="Q7Z9I1">
    <property type="glycosylation" value="2 sites, No reported glycans"/>
</dbReference>
<dbReference type="PaxDb" id="4896-SPCC188.09c.1"/>
<dbReference type="EnsemblFungi" id="SPCC188.09c.1">
    <property type="protein sequence ID" value="SPCC188.09c.1:pep"/>
    <property type="gene ID" value="SPCC188.09c"/>
</dbReference>
<dbReference type="GeneID" id="2539201"/>
<dbReference type="KEGG" id="spo:2539201"/>
<dbReference type="PomBase" id="SPCC188.09c">
    <property type="gene designation" value="pfl4"/>
</dbReference>
<dbReference type="VEuPathDB" id="FungiDB:SPCC188.09c"/>
<dbReference type="HOGENOM" id="CLU_532131_0_0_1"/>
<dbReference type="InParanoid" id="Q7Z9I1"/>
<dbReference type="OMA" id="TIMWFGD"/>
<dbReference type="PhylomeDB" id="Q7Z9I1"/>
<dbReference type="PRO" id="PR:Q7Z9I1"/>
<dbReference type="Proteomes" id="UP000002485">
    <property type="component" value="Chromosome III"/>
</dbReference>
<dbReference type="GO" id="GO:0010339">
    <property type="term" value="C:external side of cell wall"/>
    <property type="evidence" value="ECO:0000304"/>
    <property type="project" value="PomBase"/>
</dbReference>
<dbReference type="GO" id="GO:0000128">
    <property type="term" value="P:flocculation"/>
    <property type="evidence" value="ECO:0000315"/>
    <property type="project" value="PomBase"/>
</dbReference>
<dbReference type="Gene3D" id="2.60.120.1560">
    <property type="match status" value="1"/>
</dbReference>
<dbReference type="InterPro" id="IPR018871">
    <property type="entry name" value="GLEYA_adhesin_domain"/>
</dbReference>
<dbReference type="InterPro" id="IPR037524">
    <property type="entry name" value="PA14/GLEYA"/>
</dbReference>
<dbReference type="InterPro" id="IPR051905">
    <property type="entry name" value="S_pombe_Mam3/Map4"/>
</dbReference>
<dbReference type="PANTHER" id="PTHR31492">
    <property type="entry name" value="M CELL-TYPE AGGLUTINATION PROTEIN MAM3-RELATED"/>
    <property type="match status" value="1"/>
</dbReference>
<dbReference type="PANTHER" id="PTHR31492:SF14">
    <property type="entry name" value="M CELL-TYPE AGGLUTINATION PROTEIN MAM3-RELATED"/>
    <property type="match status" value="1"/>
</dbReference>
<dbReference type="Pfam" id="PF10528">
    <property type="entry name" value="GLEYA"/>
    <property type="match status" value="1"/>
</dbReference>
<dbReference type="SUPFAM" id="SSF88633">
    <property type="entry name" value="Positive stranded ssRNA viruses"/>
    <property type="match status" value="1"/>
</dbReference>
<dbReference type="PROSITE" id="PS51820">
    <property type="entry name" value="PA14"/>
    <property type="match status" value="1"/>
</dbReference>
<protein>
    <recommendedName>
        <fullName evidence="8">Putative cell agglutination protein pfl4</fullName>
    </recommendedName>
    <alternativeName>
        <fullName evidence="6">Adhesin pfl4</fullName>
    </alternativeName>
    <alternativeName>
        <fullName evidence="7">Pombe flocculin 4</fullName>
    </alternativeName>
</protein>